<organism>
    <name type="scientific">Xenopus laevis</name>
    <name type="common">African clawed frog</name>
    <dbReference type="NCBI Taxonomy" id="8355"/>
    <lineage>
        <taxon>Eukaryota</taxon>
        <taxon>Metazoa</taxon>
        <taxon>Chordata</taxon>
        <taxon>Craniata</taxon>
        <taxon>Vertebrata</taxon>
        <taxon>Euteleostomi</taxon>
        <taxon>Amphibia</taxon>
        <taxon>Batrachia</taxon>
        <taxon>Anura</taxon>
        <taxon>Pipoidea</taxon>
        <taxon>Pipidae</taxon>
        <taxon>Xenopodinae</taxon>
        <taxon>Xenopus</taxon>
        <taxon>Xenopus</taxon>
    </lineage>
</organism>
<gene>
    <name type="primary">ccno-a</name>
    <name type="synonym">ccno</name>
</gene>
<keyword id="KW-0131">Cell cycle</keyword>
<keyword id="KW-0132">Cell division</keyword>
<keyword id="KW-0970">Cilium biogenesis/degradation</keyword>
<keyword id="KW-0195">Cyclin</keyword>
<keyword id="KW-0963">Cytoplasm</keyword>
<keyword id="KW-1185">Reference proteome</keyword>
<sequence length="366" mass="40469">MVTCSMRCTEEHLLGAPAAFSSGKRKRDSGYSPGDATPGDRGEGGPDWPSAGIKKRVKYSRHRKQRLELRSCDSGVADLYETPSPSPVAPTPTNEPYDSPCTSMPDRLGLQSFSDYGHDCYLFNKSLEDKFLTVNCLKNQPQIKAESRCKLISWLIPVHKHLKLGFESLCLTVNILDRFLACTPVASDCFQLVGVTSLLIACKQVESRPPRVKQLLALCCDAFSREQLCNLECIILLKLCFRIGAPTINFFLQHFSLLRVTSVESPDTELIEATKSMTVARGIAELSLADYAFNAYSPSLVAACCLELADRMLCLRNPIGVRVSGYHQSLIKECVGKIDLLVSLNQDSLHRLLPSQFSVKSIKADN</sequence>
<name>CCNOA_XENLA</name>
<dbReference type="EMBL" id="BC108598">
    <property type="protein sequence ID" value="AAI08599.1"/>
    <property type="molecule type" value="mRNA"/>
</dbReference>
<dbReference type="RefSeq" id="NP_001089879.1">
    <property type="nucleotide sequence ID" value="NM_001096410.1"/>
</dbReference>
<dbReference type="SMR" id="Q32NJ2"/>
<dbReference type="DNASU" id="734946"/>
<dbReference type="GeneID" id="734946"/>
<dbReference type="KEGG" id="xla:734946"/>
<dbReference type="AGR" id="Xenbase:XB-GENE-979551"/>
<dbReference type="CTD" id="734946"/>
<dbReference type="Xenbase" id="XB-GENE-979551">
    <property type="gene designation" value="ccno.L"/>
</dbReference>
<dbReference type="OMA" id="RNCLARQ"/>
<dbReference type="OrthoDB" id="5590282at2759"/>
<dbReference type="Proteomes" id="UP000186698">
    <property type="component" value="Chromosome 1L"/>
</dbReference>
<dbReference type="Bgee" id="734946">
    <property type="expression patterns" value="Expressed in egg cell and 13 other cell types or tissues"/>
</dbReference>
<dbReference type="GO" id="GO:0000307">
    <property type="term" value="C:cyclin-dependent protein kinase holoenzyme complex"/>
    <property type="evidence" value="ECO:0000318"/>
    <property type="project" value="GO_Central"/>
</dbReference>
<dbReference type="GO" id="GO:0005737">
    <property type="term" value="C:cytoplasm"/>
    <property type="evidence" value="ECO:0000318"/>
    <property type="project" value="GO_Central"/>
</dbReference>
<dbReference type="GO" id="GO:0005815">
    <property type="term" value="C:microtubule organizing center"/>
    <property type="evidence" value="ECO:0000318"/>
    <property type="project" value="GO_Central"/>
</dbReference>
<dbReference type="GO" id="GO:0005634">
    <property type="term" value="C:nucleus"/>
    <property type="evidence" value="ECO:0000318"/>
    <property type="project" value="GO_Central"/>
</dbReference>
<dbReference type="GO" id="GO:0016538">
    <property type="term" value="F:cyclin-dependent protein serine/threonine kinase regulator activity"/>
    <property type="evidence" value="ECO:0000318"/>
    <property type="project" value="GO_Central"/>
</dbReference>
<dbReference type="GO" id="GO:0051301">
    <property type="term" value="P:cell division"/>
    <property type="evidence" value="ECO:0007669"/>
    <property type="project" value="UniProtKB-KW"/>
</dbReference>
<dbReference type="GO" id="GO:0060271">
    <property type="term" value="P:cilium assembly"/>
    <property type="evidence" value="ECO:0000315"/>
    <property type="project" value="UniProtKB"/>
</dbReference>
<dbReference type="GO" id="GO:0000082">
    <property type="term" value="P:G1/S transition of mitotic cell cycle"/>
    <property type="evidence" value="ECO:0000318"/>
    <property type="project" value="GO_Central"/>
</dbReference>
<dbReference type="GO" id="GO:1903251">
    <property type="term" value="P:multi-ciliated epithelial cell differentiation"/>
    <property type="evidence" value="ECO:0000315"/>
    <property type="project" value="UniProtKB"/>
</dbReference>
<dbReference type="CDD" id="cd20536">
    <property type="entry name" value="CYCLIN_CCNO_rpt1"/>
    <property type="match status" value="1"/>
</dbReference>
<dbReference type="CDD" id="cd20722">
    <property type="entry name" value="CYCLIN_CCNO_rpt2"/>
    <property type="match status" value="1"/>
</dbReference>
<dbReference type="FunFam" id="1.10.472.10:FF:000064">
    <property type="entry name" value="Cyclin O"/>
    <property type="match status" value="1"/>
</dbReference>
<dbReference type="FunFam" id="1.10.472.10:FF:000061">
    <property type="entry name" value="cyclin-O"/>
    <property type="match status" value="1"/>
</dbReference>
<dbReference type="Gene3D" id="1.10.472.10">
    <property type="entry name" value="Cyclin-like"/>
    <property type="match status" value="2"/>
</dbReference>
<dbReference type="InterPro" id="IPR039361">
    <property type="entry name" value="Cyclin"/>
</dbReference>
<dbReference type="InterPro" id="IPR013763">
    <property type="entry name" value="Cyclin-like_dom"/>
</dbReference>
<dbReference type="InterPro" id="IPR036915">
    <property type="entry name" value="Cyclin-like_sf"/>
</dbReference>
<dbReference type="InterPro" id="IPR004367">
    <property type="entry name" value="Cyclin_C-dom"/>
</dbReference>
<dbReference type="InterPro" id="IPR006671">
    <property type="entry name" value="Cyclin_N"/>
</dbReference>
<dbReference type="InterPro" id="IPR048258">
    <property type="entry name" value="Cyclins_cyclin-box"/>
</dbReference>
<dbReference type="PANTHER" id="PTHR10177">
    <property type="entry name" value="CYCLINS"/>
    <property type="match status" value="1"/>
</dbReference>
<dbReference type="Pfam" id="PF02984">
    <property type="entry name" value="Cyclin_C"/>
    <property type="match status" value="1"/>
</dbReference>
<dbReference type="Pfam" id="PF00134">
    <property type="entry name" value="Cyclin_N"/>
    <property type="match status" value="1"/>
</dbReference>
<dbReference type="SMART" id="SM00385">
    <property type="entry name" value="CYCLIN"/>
    <property type="match status" value="2"/>
</dbReference>
<dbReference type="SMART" id="SM01332">
    <property type="entry name" value="Cyclin_C"/>
    <property type="match status" value="1"/>
</dbReference>
<dbReference type="SUPFAM" id="SSF47954">
    <property type="entry name" value="Cyclin-like"/>
    <property type="match status" value="2"/>
</dbReference>
<dbReference type="PROSITE" id="PS00292">
    <property type="entry name" value="CYCLINS"/>
    <property type="match status" value="1"/>
</dbReference>
<evidence type="ECO:0000250" key="1">
    <source>
        <dbReference type="UniProtKB" id="P0C242"/>
    </source>
</evidence>
<evidence type="ECO:0000256" key="2">
    <source>
        <dbReference type="SAM" id="MobiDB-lite"/>
    </source>
</evidence>
<evidence type="ECO:0000269" key="3">
    <source>
    </source>
</evidence>
<evidence type="ECO:0000269" key="4">
    <source>
    </source>
</evidence>
<evidence type="ECO:0000305" key="5"/>
<protein>
    <recommendedName>
        <fullName>Cyclin-O protein A</fullName>
    </recommendedName>
</protein>
<feature type="chain" id="PRO_0000430434" description="Cyclin-O protein A">
    <location>
        <begin position="1"/>
        <end position="366"/>
    </location>
</feature>
<feature type="region of interest" description="Disordered" evidence="2">
    <location>
        <begin position="18"/>
        <end position="55"/>
    </location>
</feature>
<feature type="region of interest" description="Disordered" evidence="2">
    <location>
        <begin position="80"/>
        <end position="99"/>
    </location>
</feature>
<feature type="mutagenesis site" description="Decreased formation of basal bodies in multiciliated cells." evidence="4">
    <original>L</original>
    <variation>P</variation>
    <location>
        <position position="228"/>
    </location>
</feature>
<comment type="function">
    <text evidence="3 4">Specifically required for generation of multiciliated cells, possibly by promoting a cell cycle state compatible with centriole amplification and maturation. Acts downstream of mcidas to promote mother centriole amplification and maturation in preparation for apical docking.</text>
</comment>
<comment type="subcellular location">
    <subcellularLocation>
        <location evidence="1">Cytoplasm</location>
    </subcellularLocation>
    <text evidence="1">Localizes to the apical part of cytoplasm.</text>
</comment>
<comment type="similarity">
    <text evidence="5">Belongs to the cyclin family.</text>
</comment>
<proteinExistence type="evidence at protein level"/>
<accession>Q32NJ2</accession>
<reference key="1">
    <citation type="submission" date="2005-11" db="EMBL/GenBank/DDBJ databases">
        <authorList>
            <consortium name="NIH - Xenopus Gene Collection (XGC) project"/>
        </authorList>
    </citation>
    <scope>NUCLEOTIDE SEQUENCE [LARGE SCALE MRNA]</scope>
    <source>
        <tissue>Embryo</tissue>
    </source>
</reference>
<reference key="2">
    <citation type="journal article" date="2014" name="Nat. Genet.">
        <title>Mutations in CCNO result in congenital mucociliary clearance disorder with reduced generation of multiple motile cilia.</title>
        <authorList>
            <person name="Wallmeier J."/>
            <person name="Al-Mutairi D.A."/>
            <person name="Chen C.T."/>
            <person name="Loges N.T."/>
            <person name="Pennekamp P."/>
            <person name="Menchen T."/>
            <person name="Ma L."/>
            <person name="Shamseldin H.E."/>
            <person name="Olbrich H."/>
            <person name="Dougherty G.W."/>
            <person name="Werner C."/>
            <person name="Alsabah B.H."/>
            <person name="Koehler G."/>
            <person name="Jaspers M."/>
            <person name="Boon M."/>
            <person name="Griese M."/>
            <person name="Schmitt-Grohe S."/>
            <person name="Zimmermann T."/>
            <person name="Koerner-Rettberg C."/>
            <person name="Horak E."/>
            <person name="Kintner C."/>
            <person name="Alkuraya F.S."/>
            <person name="Omran H."/>
        </authorList>
    </citation>
    <scope>FUNCTION</scope>
</reference>
<reference key="3">
    <citation type="journal article" date="2016" name="Hum. Mutat.">
        <title>Systematic analysis of CCNO variants in a defined population: implications for clinical phenotype and differential diagnosis.</title>
        <authorList>
            <consortium name="Israeli PCD Consortium Investigators"/>
            <person name="Amirav I."/>
            <person name="Wallmeier J."/>
            <person name="Loges N.T."/>
            <person name="Menchen T."/>
            <person name="Pennekamp P."/>
            <person name="Mussaffi H."/>
            <person name="Abitbul R."/>
            <person name="Avital A."/>
            <person name="Bentur L."/>
            <person name="Dougherty G.W."/>
            <person name="Nael E."/>
            <person name="Lavie M."/>
            <person name="Olbrich H."/>
            <person name="Werner C."/>
            <person name="Kintner C."/>
            <person name="Omran H."/>
        </authorList>
    </citation>
    <scope>FUNCTION</scope>
    <scope>MUTAGENESIS OF LEU-228</scope>
</reference>